<keyword id="KW-0560">Oxidoreductase</keyword>
<keyword id="KW-1185">Reference proteome</keyword>
<organism evidence="7">
    <name type="scientific">Drosophila melanogaster</name>
    <name type="common">Fruit fly</name>
    <dbReference type="NCBI Taxonomy" id="7227"/>
    <lineage>
        <taxon>Eukaryota</taxon>
        <taxon>Metazoa</taxon>
        <taxon>Ecdysozoa</taxon>
        <taxon>Arthropoda</taxon>
        <taxon>Hexapoda</taxon>
        <taxon>Insecta</taxon>
        <taxon>Pterygota</taxon>
        <taxon>Neoptera</taxon>
        <taxon>Endopterygota</taxon>
        <taxon>Diptera</taxon>
        <taxon>Brachycera</taxon>
        <taxon>Muscomorpha</taxon>
        <taxon>Ephydroidea</taxon>
        <taxon>Drosophilidae</taxon>
        <taxon>Drosophila</taxon>
        <taxon>Sophophora</taxon>
    </lineage>
</organism>
<proteinExistence type="evidence at protein level"/>
<reference key="1">
    <citation type="journal article" date="2000" name="Science">
        <title>The genome sequence of Drosophila melanogaster.</title>
        <authorList>
            <person name="Adams M.D."/>
            <person name="Celniker S.E."/>
            <person name="Holt R.A."/>
            <person name="Evans C.A."/>
            <person name="Gocayne J.D."/>
            <person name="Amanatides P.G."/>
            <person name="Scherer S.E."/>
            <person name="Li P.W."/>
            <person name="Hoskins R.A."/>
            <person name="Galle R.F."/>
            <person name="George R.A."/>
            <person name="Lewis S.E."/>
            <person name="Richards S."/>
            <person name="Ashburner M."/>
            <person name="Henderson S.N."/>
            <person name="Sutton G.G."/>
            <person name="Wortman J.R."/>
            <person name="Yandell M.D."/>
            <person name="Zhang Q."/>
            <person name="Chen L.X."/>
            <person name="Brandon R.C."/>
            <person name="Rogers Y.-H.C."/>
            <person name="Blazej R.G."/>
            <person name="Champe M."/>
            <person name="Pfeiffer B.D."/>
            <person name="Wan K.H."/>
            <person name="Doyle C."/>
            <person name="Baxter E.G."/>
            <person name="Helt G."/>
            <person name="Nelson C.R."/>
            <person name="Miklos G.L.G."/>
            <person name="Abril J.F."/>
            <person name="Agbayani A."/>
            <person name="An H.-J."/>
            <person name="Andrews-Pfannkoch C."/>
            <person name="Baldwin D."/>
            <person name="Ballew R.M."/>
            <person name="Basu A."/>
            <person name="Baxendale J."/>
            <person name="Bayraktaroglu L."/>
            <person name="Beasley E.M."/>
            <person name="Beeson K.Y."/>
            <person name="Benos P.V."/>
            <person name="Berman B.P."/>
            <person name="Bhandari D."/>
            <person name="Bolshakov S."/>
            <person name="Borkova D."/>
            <person name="Botchan M.R."/>
            <person name="Bouck J."/>
            <person name="Brokstein P."/>
            <person name="Brottier P."/>
            <person name="Burtis K.C."/>
            <person name="Busam D.A."/>
            <person name="Butler H."/>
            <person name="Cadieu E."/>
            <person name="Center A."/>
            <person name="Chandra I."/>
            <person name="Cherry J.M."/>
            <person name="Cawley S."/>
            <person name="Dahlke C."/>
            <person name="Davenport L.B."/>
            <person name="Davies P."/>
            <person name="de Pablos B."/>
            <person name="Delcher A."/>
            <person name="Deng Z."/>
            <person name="Mays A.D."/>
            <person name="Dew I."/>
            <person name="Dietz S.M."/>
            <person name="Dodson K."/>
            <person name="Doup L.E."/>
            <person name="Downes M."/>
            <person name="Dugan-Rocha S."/>
            <person name="Dunkov B.C."/>
            <person name="Dunn P."/>
            <person name="Durbin K.J."/>
            <person name="Evangelista C.C."/>
            <person name="Ferraz C."/>
            <person name="Ferriera S."/>
            <person name="Fleischmann W."/>
            <person name="Fosler C."/>
            <person name="Gabrielian A.E."/>
            <person name="Garg N.S."/>
            <person name="Gelbart W.M."/>
            <person name="Glasser K."/>
            <person name="Glodek A."/>
            <person name="Gong F."/>
            <person name="Gorrell J.H."/>
            <person name="Gu Z."/>
            <person name="Guan P."/>
            <person name="Harris M."/>
            <person name="Harris N.L."/>
            <person name="Harvey D.A."/>
            <person name="Heiman T.J."/>
            <person name="Hernandez J.R."/>
            <person name="Houck J."/>
            <person name="Hostin D."/>
            <person name="Houston K.A."/>
            <person name="Howland T.J."/>
            <person name="Wei M.-H."/>
            <person name="Ibegwam C."/>
            <person name="Jalali M."/>
            <person name="Kalush F."/>
            <person name="Karpen G.H."/>
            <person name="Ke Z."/>
            <person name="Kennison J.A."/>
            <person name="Ketchum K.A."/>
            <person name="Kimmel B.E."/>
            <person name="Kodira C.D."/>
            <person name="Kraft C.L."/>
            <person name="Kravitz S."/>
            <person name="Kulp D."/>
            <person name="Lai Z."/>
            <person name="Lasko P."/>
            <person name="Lei Y."/>
            <person name="Levitsky A.A."/>
            <person name="Li J.H."/>
            <person name="Li Z."/>
            <person name="Liang Y."/>
            <person name="Lin X."/>
            <person name="Liu X."/>
            <person name="Mattei B."/>
            <person name="McIntosh T.C."/>
            <person name="McLeod M.P."/>
            <person name="McPherson D."/>
            <person name="Merkulov G."/>
            <person name="Milshina N.V."/>
            <person name="Mobarry C."/>
            <person name="Morris J."/>
            <person name="Moshrefi A."/>
            <person name="Mount S.M."/>
            <person name="Moy M."/>
            <person name="Murphy B."/>
            <person name="Murphy L."/>
            <person name="Muzny D.M."/>
            <person name="Nelson D.L."/>
            <person name="Nelson D.R."/>
            <person name="Nelson K.A."/>
            <person name="Nixon K."/>
            <person name="Nusskern D.R."/>
            <person name="Pacleb J.M."/>
            <person name="Palazzolo M."/>
            <person name="Pittman G.S."/>
            <person name="Pan S."/>
            <person name="Pollard J."/>
            <person name="Puri V."/>
            <person name="Reese M.G."/>
            <person name="Reinert K."/>
            <person name="Remington K."/>
            <person name="Saunders R.D.C."/>
            <person name="Scheeler F."/>
            <person name="Shen H."/>
            <person name="Shue B.C."/>
            <person name="Siden-Kiamos I."/>
            <person name="Simpson M."/>
            <person name="Skupski M.P."/>
            <person name="Smith T.J."/>
            <person name="Spier E."/>
            <person name="Spradling A.C."/>
            <person name="Stapleton M."/>
            <person name="Strong R."/>
            <person name="Sun E."/>
            <person name="Svirskas R."/>
            <person name="Tector C."/>
            <person name="Turner R."/>
            <person name="Venter E."/>
            <person name="Wang A.H."/>
            <person name="Wang X."/>
            <person name="Wang Z.-Y."/>
            <person name="Wassarman D.A."/>
            <person name="Weinstock G.M."/>
            <person name="Weissenbach J."/>
            <person name="Williams S.M."/>
            <person name="Woodage T."/>
            <person name="Worley K.C."/>
            <person name="Wu D."/>
            <person name="Yang S."/>
            <person name="Yao Q.A."/>
            <person name="Ye J."/>
            <person name="Yeh R.-F."/>
            <person name="Zaveri J.S."/>
            <person name="Zhan M."/>
            <person name="Zhang G."/>
            <person name="Zhao Q."/>
            <person name="Zheng L."/>
            <person name="Zheng X.H."/>
            <person name="Zhong F.N."/>
            <person name="Zhong W."/>
            <person name="Zhou X."/>
            <person name="Zhu S.C."/>
            <person name="Zhu X."/>
            <person name="Smith H.O."/>
            <person name="Gibbs R.A."/>
            <person name="Myers E.W."/>
            <person name="Rubin G.M."/>
            <person name="Venter J.C."/>
        </authorList>
    </citation>
    <scope>NUCLEOTIDE SEQUENCE [LARGE SCALE GENOMIC DNA]</scope>
    <source>
        <strain>Berkeley</strain>
    </source>
</reference>
<reference key="2">
    <citation type="journal article" date="2002" name="Genome Biol.">
        <title>Annotation of the Drosophila melanogaster euchromatic genome: a systematic review.</title>
        <authorList>
            <person name="Misra S."/>
            <person name="Crosby M.A."/>
            <person name="Mungall C.J."/>
            <person name="Matthews B.B."/>
            <person name="Campbell K.S."/>
            <person name="Hradecky P."/>
            <person name="Huang Y."/>
            <person name="Kaminker J.S."/>
            <person name="Millburn G.H."/>
            <person name="Prochnik S.E."/>
            <person name="Smith C.D."/>
            <person name="Tupy J.L."/>
            <person name="Whitfield E.J."/>
            <person name="Bayraktaroglu L."/>
            <person name="Berman B.P."/>
            <person name="Bettencourt B.R."/>
            <person name="Celniker S.E."/>
            <person name="de Grey A.D.N.J."/>
            <person name="Drysdale R.A."/>
            <person name="Harris N.L."/>
            <person name="Richter J."/>
            <person name="Russo S."/>
            <person name="Schroeder A.J."/>
            <person name="Shu S.Q."/>
            <person name="Stapleton M."/>
            <person name="Yamada C."/>
            <person name="Ashburner M."/>
            <person name="Gelbart W.M."/>
            <person name="Rubin G.M."/>
            <person name="Lewis S.E."/>
        </authorList>
    </citation>
    <scope>GENOME REANNOTATION</scope>
    <source>
        <strain>Berkeley</strain>
    </source>
</reference>
<reference key="3">
    <citation type="journal article" date="2002" name="Genome Biol.">
        <title>A Drosophila full-length cDNA resource.</title>
        <authorList>
            <person name="Stapleton M."/>
            <person name="Carlson J.W."/>
            <person name="Brokstein P."/>
            <person name="Yu C."/>
            <person name="Champe M."/>
            <person name="George R.A."/>
            <person name="Guarin H."/>
            <person name="Kronmiller B."/>
            <person name="Pacleb J.M."/>
            <person name="Park S."/>
            <person name="Wan K.H."/>
            <person name="Rubin G.M."/>
            <person name="Celniker S.E."/>
        </authorList>
    </citation>
    <scope>NUCLEOTIDE SEQUENCE [LARGE SCALE MRNA]</scope>
    <source>
        <strain>Berkeley</strain>
        <tissue>Head</tissue>
    </source>
</reference>
<reference key="4">
    <citation type="journal article" date="2009" name="J. Hered.">
        <title>Evolution of the GST omega gene family in 12 Drosophila species.</title>
        <authorList>
            <person name="Walters K.B."/>
            <person name="Grant P."/>
            <person name="Johnson D.L."/>
        </authorList>
    </citation>
    <scope>NUCLEOTIDE SEQUENCE [GENOMIC DNA] OF 1-200</scope>
</reference>
<reference key="5">
    <citation type="journal article" date="1984" name="J. Biol. Chem.">
        <title>Purification and properties of the enzymes from Drosophila melanogaster that catalyze the conversion of dihydroneopterin triphosphate to the pyrimidodiazepine precursor of the drosopterins.</title>
        <authorList>
            <person name="Wiederrecht G.J."/>
            <person name="Brown G.M."/>
        </authorList>
    </citation>
    <scope>FUNCTION</scope>
</reference>
<reference key="6">
    <citation type="journal article" date="2006" name="Biochem. J.">
        <title>Identification and characteristics of the structural gene for the Drosophila eye color mutant sepia, encoding PDA synthase, a member of the omega class glutathione S-transferases.</title>
        <authorList>
            <person name="Kim J."/>
            <person name="Suh H."/>
            <person name="Kim S."/>
            <person name="Kim K."/>
            <person name="Ahn C."/>
            <person name="Yim J."/>
        </authorList>
    </citation>
    <scope>FUNCTION</scope>
    <scope>CATALYTIC ACTIVITY</scope>
    <scope>DISRUPTION PHENOTYPE</scope>
    <scope>SUBUNIT</scope>
    <scope>DEVELOPMENTAL STAGE</scope>
</reference>
<feature type="chain" id="PRO_0000430582" description="Pyrimidodiazepine synthase">
    <location>
        <begin position="1"/>
        <end position="243"/>
    </location>
</feature>
<feature type="domain" description="GST N-terminal" evidence="2">
    <location>
        <begin position="20"/>
        <end position="102"/>
    </location>
</feature>
<feature type="domain" description="GST C-terminal" evidence="2">
    <location>
        <begin position="107"/>
        <end position="230"/>
    </location>
</feature>
<feature type="active site" description="Nucleophile" evidence="1">
    <location>
        <position position="30"/>
    </location>
</feature>
<feature type="binding site" evidence="1">
    <location>
        <position position="57"/>
    </location>
    <ligand>
        <name>glutathione</name>
        <dbReference type="ChEBI" id="CHEBI:57925"/>
    </ligand>
</feature>
<feature type="binding site" evidence="1">
    <location>
        <position position="70"/>
    </location>
    <ligand>
        <name>glutathione</name>
        <dbReference type="ChEBI" id="CHEBI:57925"/>
    </ligand>
</feature>
<feature type="binding site" evidence="1">
    <location>
        <begin position="86"/>
        <end position="87"/>
    </location>
    <ligand>
        <name>glutathione</name>
        <dbReference type="ChEBI" id="CHEBI:57925"/>
    </ligand>
</feature>
<dbReference type="EC" id="1.5.4.1" evidence="3"/>
<dbReference type="EMBL" id="AE014296">
    <property type="protein sequence ID" value="AAF50405.1"/>
    <property type="molecule type" value="Genomic_DNA"/>
</dbReference>
<dbReference type="EMBL" id="AY070667">
    <property type="protein sequence ID" value="AAL48138.1"/>
    <property type="molecule type" value="mRNA"/>
</dbReference>
<dbReference type="EMBL" id="GQ351317">
    <property type="protein sequence ID" value="ACZ02425.1"/>
    <property type="status" value="ALT_SEQ"/>
    <property type="molecule type" value="Genomic_DNA"/>
</dbReference>
<dbReference type="EMBL" id="GQ351318">
    <property type="protein sequence ID" value="ACZ02430.1"/>
    <property type="status" value="ALT_SEQ"/>
    <property type="molecule type" value="Genomic_DNA"/>
</dbReference>
<dbReference type="RefSeq" id="NP_648235.1">
    <property type="nucleotide sequence ID" value="NM_139978.4"/>
</dbReference>
<dbReference type="SMR" id="Q9VSL3"/>
<dbReference type="BioGRID" id="64383">
    <property type="interactions" value="1"/>
</dbReference>
<dbReference type="FunCoup" id="Q9VSL3">
    <property type="interactions" value="212"/>
</dbReference>
<dbReference type="IntAct" id="Q9VSL3">
    <property type="interactions" value="1"/>
</dbReference>
<dbReference type="STRING" id="7227.FBpp0076349"/>
<dbReference type="PaxDb" id="7227-FBpp0076349"/>
<dbReference type="DNASU" id="38973"/>
<dbReference type="EnsemblMetazoa" id="FBtr0076623">
    <property type="protein sequence ID" value="FBpp0076349"/>
    <property type="gene ID" value="FBgn0086348"/>
</dbReference>
<dbReference type="GeneID" id="38973"/>
<dbReference type="KEGG" id="dme:Dmel_CG6781"/>
<dbReference type="UCSC" id="CG6781-RA">
    <property type="organism name" value="d. melanogaster"/>
</dbReference>
<dbReference type="AGR" id="FB:FBgn0086348"/>
<dbReference type="CTD" id="38973"/>
<dbReference type="FlyBase" id="FBgn0086348">
    <property type="gene designation" value="se"/>
</dbReference>
<dbReference type="VEuPathDB" id="VectorBase:FBgn0086348"/>
<dbReference type="eggNOG" id="KOG0406">
    <property type="taxonomic scope" value="Eukaryota"/>
</dbReference>
<dbReference type="GeneTree" id="ENSGT00940000163896"/>
<dbReference type="HOGENOM" id="CLU_011226_9_2_1"/>
<dbReference type="InParanoid" id="Q9VSL3"/>
<dbReference type="OMA" id="ADHYSHR"/>
<dbReference type="OrthoDB" id="4951845at2759"/>
<dbReference type="PhylomeDB" id="Q9VSL3"/>
<dbReference type="BioCyc" id="MetaCyc:MONOMER-18458"/>
<dbReference type="Reactome" id="R-DME-156581">
    <property type="pathway name" value="Methylation"/>
</dbReference>
<dbReference type="Reactome" id="R-DME-156590">
    <property type="pathway name" value="Glutathione conjugation"/>
</dbReference>
<dbReference type="Reactome" id="R-DME-196836">
    <property type="pathway name" value="Vitamin C (ascorbate) metabolism"/>
</dbReference>
<dbReference type="BioGRID-ORCS" id="38973">
    <property type="hits" value="0 hits in 3 CRISPR screens"/>
</dbReference>
<dbReference type="GenomeRNAi" id="38973"/>
<dbReference type="PRO" id="PR:Q9VSL3"/>
<dbReference type="Proteomes" id="UP000000803">
    <property type="component" value="Chromosome 3L"/>
</dbReference>
<dbReference type="Bgee" id="FBgn0086348">
    <property type="expression patterns" value="Expressed in distal medullary amacrine neuron Dm11 in insect head and 49 other cell types or tissues"/>
</dbReference>
<dbReference type="GO" id="GO:0005737">
    <property type="term" value="C:cytoplasm"/>
    <property type="evidence" value="ECO:0000250"/>
    <property type="project" value="FlyBase"/>
</dbReference>
<dbReference type="GO" id="GO:0045174">
    <property type="term" value="F:glutathione dehydrogenase (ascorbate) activity"/>
    <property type="evidence" value="ECO:0000314"/>
    <property type="project" value="FlyBase"/>
</dbReference>
<dbReference type="GO" id="GO:0004364">
    <property type="term" value="F:glutathione transferase activity"/>
    <property type="evidence" value="ECO:0000314"/>
    <property type="project" value="FlyBase"/>
</dbReference>
<dbReference type="GO" id="GO:0042803">
    <property type="term" value="F:protein homodimerization activity"/>
    <property type="evidence" value="ECO:0000353"/>
    <property type="project" value="FlyBase"/>
</dbReference>
<dbReference type="GO" id="GO:0004734">
    <property type="term" value="F:pyrimidodiazepine synthase activity"/>
    <property type="evidence" value="ECO:0000314"/>
    <property type="project" value="FlyBase"/>
</dbReference>
<dbReference type="GO" id="GO:0006726">
    <property type="term" value="P:eye pigment biosynthetic process"/>
    <property type="evidence" value="ECO:0000316"/>
    <property type="project" value="FlyBase"/>
</dbReference>
<dbReference type="GO" id="GO:0006749">
    <property type="term" value="P:glutathione metabolic process"/>
    <property type="evidence" value="ECO:0000314"/>
    <property type="project" value="FlyBase"/>
</dbReference>
<dbReference type="GO" id="GO:0006728">
    <property type="term" value="P:pteridine biosynthetic process"/>
    <property type="evidence" value="ECO:0000314"/>
    <property type="project" value="FlyBase"/>
</dbReference>
<dbReference type="CDD" id="cd03184">
    <property type="entry name" value="GST_C_Omega"/>
    <property type="match status" value="1"/>
</dbReference>
<dbReference type="CDD" id="cd03055">
    <property type="entry name" value="GST_N_Omega"/>
    <property type="match status" value="1"/>
</dbReference>
<dbReference type="FunFam" id="1.20.1050.10:FF:000009">
    <property type="entry name" value="Glutathione S-transferase omega-1"/>
    <property type="match status" value="1"/>
</dbReference>
<dbReference type="FunFam" id="3.40.30.10:FF:000123">
    <property type="entry name" value="Glutathione transferase o1"/>
    <property type="match status" value="1"/>
</dbReference>
<dbReference type="Gene3D" id="1.20.1050.10">
    <property type="match status" value="1"/>
</dbReference>
<dbReference type="Gene3D" id="3.40.30.10">
    <property type="entry name" value="Glutaredoxin"/>
    <property type="match status" value="1"/>
</dbReference>
<dbReference type="InterPro" id="IPR010987">
    <property type="entry name" value="Glutathione-S-Trfase_C-like"/>
</dbReference>
<dbReference type="InterPro" id="IPR036282">
    <property type="entry name" value="Glutathione-S-Trfase_C_sf"/>
</dbReference>
<dbReference type="InterPro" id="IPR040079">
    <property type="entry name" value="Glutathione_S-Trfase"/>
</dbReference>
<dbReference type="InterPro" id="IPR004045">
    <property type="entry name" value="Glutathione_S-Trfase_N"/>
</dbReference>
<dbReference type="InterPro" id="IPR005442">
    <property type="entry name" value="GST_omega"/>
</dbReference>
<dbReference type="InterPro" id="IPR050983">
    <property type="entry name" value="GST_Omega/HSP26"/>
</dbReference>
<dbReference type="InterPro" id="IPR036249">
    <property type="entry name" value="Thioredoxin-like_sf"/>
</dbReference>
<dbReference type="PANTHER" id="PTHR43968">
    <property type="match status" value="1"/>
</dbReference>
<dbReference type="PANTHER" id="PTHR43968:SF6">
    <property type="entry name" value="GLUTATHIONE S-TRANSFERASE OMEGA"/>
    <property type="match status" value="1"/>
</dbReference>
<dbReference type="Pfam" id="PF13410">
    <property type="entry name" value="GST_C_2"/>
    <property type="match status" value="1"/>
</dbReference>
<dbReference type="Pfam" id="PF13417">
    <property type="entry name" value="GST_N_3"/>
    <property type="match status" value="1"/>
</dbReference>
<dbReference type="PRINTS" id="PR01625">
    <property type="entry name" value="GSTRNSFRASEO"/>
</dbReference>
<dbReference type="SFLD" id="SFLDS00019">
    <property type="entry name" value="Glutathione_Transferase_(cytos"/>
    <property type="match status" value="1"/>
</dbReference>
<dbReference type="SFLD" id="SFLDG00358">
    <property type="entry name" value="Main_(cytGST)"/>
    <property type="match status" value="1"/>
</dbReference>
<dbReference type="SUPFAM" id="SSF47616">
    <property type="entry name" value="GST C-terminal domain-like"/>
    <property type="match status" value="1"/>
</dbReference>
<dbReference type="SUPFAM" id="SSF52833">
    <property type="entry name" value="Thioredoxin-like"/>
    <property type="match status" value="1"/>
</dbReference>
<dbReference type="PROSITE" id="PS50405">
    <property type="entry name" value="GST_CTER"/>
    <property type="match status" value="1"/>
</dbReference>
<dbReference type="PROSITE" id="PS50404">
    <property type="entry name" value="GST_NTER"/>
    <property type="match status" value="1"/>
</dbReference>
<evidence type="ECO:0000250" key="1">
    <source>
        <dbReference type="UniProtKB" id="P78417"/>
    </source>
</evidence>
<evidence type="ECO:0000255" key="2"/>
<evidence type="ECO:0000269" key="3">
    <source>
    </source>
</evidence>
<evidence type="ECO:0000269" key="4">
    <source>
    </source>
</evidence>
<evidence type="ECO:0000303" key="5">
    <source>
    </source>
</evidence>
<evidence type="ECO:0000305" key="6"/>
<evidence type="ECO:0000312" key="7">
    <source>
        <dbReference type="EMBL" id="AAF50405.1"/>
    </source>
</evidence>
<evidence type="ECO:0000312" key="8">
    <source>
        <dbReference type="FlyBase" id="FBgn0086348"/>
    </source>
</evidence>
<name>SEPIA_DROME</name>
<sequence>MSNGRHLAKGSPMPDVPEDGILRLYSMRFCPFAQRVHLVLDAKQIPYHSIYINLTDKPEWLLEKNPQGKVPALEIVREPGPPVLTESLLICEYLDEQYPLRPLYPRDPLKKVQDKLLIERFRAVLGAFFKASDGGDLEPFWSGLDIYERELARRGTEFFGGEQTGILDYMIWPWCERLELLKLQRGEDYNYDQSRFPQLTLWLERMKRDPAVMAFYMEAEVQAEFLRTRSLGRPNYNLLVKDA</sequence>
<accession>Q9VSL3</accession>
<accession>D1KS67</accession>
<accession>D1KS72</accession>
<protein>
    <recommendedName>
        <fullName evidence="6">Pyrimidodiazepine synthase</fullName>
        <ecNumber evidence="3">1.5.4.1</ecNumber>
    </recommendedName>
    <alternativeName>
        <fullName evidence="5">Protein sepia</fullName>
    </alternativeName>
</protein>
<gene>
    <name evidence="8" type="primary">se</name>
    <name evidence="8" type="ORF">CG6781</name>
</gene>
<comment type="function">
    <text evidence="3 4">Mediates the conversion of 2-amino-4-oxo-6-pyruvoyl-5,6,7,8-tetrahydropteridine (6-PTP; also named 6-pyruvoyltetrahydropterin) to 2-amino-6-acetyl-3,7,8,9-tetrahydro-3H-pyrimido(4,5-b)[1,4]diazepin-4-one (pyrimidodiazepine or PDA), a key intermediate in red eye pigment drosopterin biosynthesis.</text>
</comment>
<comment type="catalytic activity">
    <reaction evidence="3">
        <text>2-amino-6-acetyl-3,7,8,9-tetrahydro-3H-pyrimido[4,5-b][1,4]diazepin-4-one + glutathione disulfide + H2O = 6-pyruvoyl-5,6,7,8-tetrahydropterin + 2 glutathione</text>
        <dbReference type="Rhea" id="RHEA:10720"/>
        <dbReference type="ChEBI" id="CHEBI:15377"/>
        <dbReference type="ChEBI" id="CHEBI:27714"/>
        <dbReference type="ChEBI" id="CHEBI:57925"/>
        <dbReference type="ChEBI" id="CHEBI:58297"/>
        <dbReference type="ChEBI" id="CHEBI:136564"/>
        <dbReference type="EC" id="1.5.4.1"/>
    </reaction>
</comment>
<comment type="subunit">
    <text evidence="3">Homodimer.</text>
</comment>
<comment type="developmental stage">
    <text evidence="3">Appears only at the late pupal stage; expressed at high level. Also expressed in the early adult (0-2 days old) at lower level. Expressed exclusively in the adult head.</text>
</comment>
<comment type="disruption phenotype">
    <text evidence="3">Sepia eye color, due to defects in 2-amino-6-acetyl-3,7,8,9-tetrahydro-3H-pyrimido(4,5-b)[1,4]diazepin-4-one (pyrimidodiazepine or PDA) synthesis, a key intermediate in red eye pigment drosopterin biosynthesis.</text>
</comment>
<comment type="similarity">
    <text evidence="6">Belongs to the GST superfamily. Omega family.</text>
</comment>
<comment type="sequence caution" evidence="6">
    <conflict type="erroneous gene model prediction">
        <sequence resource="EMBL-CDS" id="ACZ02425"/>
    </conflict>
</comment>
<comment type="sequence caution" evidence="6">
    <conflict type="erroneous gene model prediction">
        <sequence resource="EMBL-CDS" id="ACZ02430"/>
    </conflict>
</comment>